<accession>Q5UQ27</accession>
<feature type="chain" id="PRO_0000121331" description="Probable Rab-related GTPase">
    <location>
        <begin position="1"/>
        <end position="212"/>
    </location>
</feature>
<feature type="propeptide" id="PRO_0000370840" description="Removed in mature form" evidence="2">
    <location>
        <begin position="213"/>
        <end position="215"/>
    </location>
</feature>
<feature type="short sequence motif" description="Effector region" evidence="1">
    <location>
        <begin position="42"/>
        <end position="50"/>
    </location>
</feature>
<feature type="binding site" evidence="1">
    <location>
        <begin position="20"/>
        <end position="27"/>
    </location>
    <ligand>
        <name>GTP</name>
        <dbReference type="ChEBI" id="CHEBI:37565"/>
    </ligand>
</feature>
<feature type="binding site" evidence="1">
    <location>
        <begin position="69"/>
        <end position="73"/>
    </location>
    <ligand>
        <name>GTP</name>
        <dbReference type="ChEBI" id="CHEBI:37565"/>
    </ligand>
</feature>
<feature type="binding site" evidence="1">
    <location>
        <begin position="127"/>
        <end position="130"/>
    </location>
    <ligand>
        <name>GTP</name>
        <dbReference type="ChEBI" id="CHEBI:37565"/>
    </ligand>
</feature>
<feature type="modified residue" description="Cysteine methyl ester; by host" evidence="2">
    <location>
        <position position="212"/>
    </location>
</feature>
<feature type="lipid moiety-binding region" description="S-geranylgeranyl cysteine; by host" evidence="1">
    <location>
        <position position="211"/>
    </location>
</feature>
<feature type="lipid moiety-binding region" description="S-geranylgeranyl cysteine; by host" evidence="1">
    <location>
        <position position="212"/>
    </location>
</feature>
<feature type="strand" evidence="4">
    <location>
        <begin position="14"/>
        <end position="21"/>
    </location>
</feature>
<feature type="helix" evidence="4">
    <location>
        <begin position="26"/>
        <end position="34"/>
    </location>
</feature>
<feature type="strand" evidence="4">
    <location>
        <begin position="49"/>
        <end position="56"/>
    </location>
</feature>
<feature type="strand" evidence="4">
    <location>
        <begin position="62"/>
        <end position="69"/>
    </location>
</feature>
<feature type="helix" evidence="4">
    <location>
        <begin position="74"/>
        <end position="76"/>
    </location>
</feature>
<feature type="helix" evidence="4">
    <location>
        <begin position="77"/>
        <end position="80"/>
    </location>
</feature>
<feature type="helix" evidence="4">
    <location>
        <begin position="81"/>
        <end position="83"/>
    </location>
</feature>
<feature type="strand" evidence="4">
    <location>
        <begin position="88"/>
        <end position="95"/>
    </location>
</feature>
<feature type="helix" evidence="4">
    <location>
        <begin position="99"/>
        <end position="115"/>
    </location>
</feature>
<feature type="strand" evidence="4">
    <location>
        <begin position="121"/>
        <end position="127"/>
    </location>
</feature>
<feature type="helix" evidence="4">
    <location>
        <begin position="133"/>
        <end position="135"/>
    </location>
</feature>
<feature type="helix" evidence="4">
    <location>
        <begin position="140"/>
        <end position="149"/>
    </location>
</feature>
<feature type="strand" evidence="4">
    <location>
        <begin position="153"/>
        <end position="156"/>
    </location>
</feature>
<feature type="helix" evidence="4">
    <location>
        <begin position="162"/>
        <end position="177"/>
    </location>
</feature>
<dbReference type="EMBL" id="AY653733">
    <property type="protein sequence ID" value="AAV50487.1"/>
    <property type="molecule type" value="Genomic_DNA"/>
</dbReference>
<dbReference type="PDB" id="5XC3">
    <property type="method" value="X-ray"/>
    <property type="resolution" value="1.50 A"/>
    <property type="chains" value="A=9-184"/>
</dbReference>
<dbReference type="PDB" id="5XC5">
    <property type="method" value="X-ray"/>
    <property type="resolution" value="1.40 A"/>
    <property type="chains" value="A=9-184"/>
</dbReference>
<dbReference type="PDBsum" id="5XC3"/>
<dbReference type="PDBsum" id="5XC5"/>
<dbReference type="SMR" id="Q5UQ27"/>
<dbReference type="Proteomes" id="UP000001134">
    <property type="component" value="Genome"/>
</dbReference>
<dbReference type="GO" id="GO:0020002">
    <property type="term" value="C:host cell plasma membrane"/>
    <property type="evidence" value="ECO:0007669"/>
    <property type="project" value="UniProtKB-SubCell"/>
</dbReference>
<dbReference type="GO" id="GO:0016020">
    <property type="term" value="C:membrane"/>
    <property type="evidence" value="ECO:0007669"/>
    <property type="project" value="UniProtKB-KW"/>
</dbReference>
<dbReference type="GO" id="GO:0005525">
    <property type="term" value="F:GTP binding"/>
    <property type="evidence" value="ECO:0007669"/>
    <property type="project" value="UniProtKB-KW"/>
</dbReference>
<dbReference type="GO" id="GO:0003924">
    <property type="term" value="F:GTPase activity"/>
    <property type="evidence" value="ECO:0007669"/>
    <property type="project" value="InterPro"/>
</dbReference>
<dbReference type="GO" id="GO:0015031">
    <property type="term" value="P:protein transport"/>
    <property type="evidence" value="ECO:0007669"/>
    <property type="project" value="UniProtKB-KW"/>
</dbReference>
<dbReference type="CDD" id="cd00154">
    <property type="entry name" value="Rab"/>
    <property type="match status" value="1"/>
</dbReference>
<dbReference type="FunFam" id="3.40.50.300:FF:001462">
    <property type="entry name" value="Small GTP-binding protein, putative"/>
    <property type="match status" value="1"/>
</dbReference>
<dbReference type="Gene3D" id="3.40.50.300">
    <property type="entry name" value="P-loop containing nucleotide triphosphate hydrolases"/>
    <property type="match status" value="1"/>
</dbReference>
<dbReference type="InterPro" id="IPR027417">
    <property type="entry name" value="P-loop_NTPase"/>
</dbReference>
<dbReference type="InterPro" id="IPR005225">
    <property type="entry name" value="Small_GTP-bd"/>
</dbReference>
<dbReference type="InterPro" id="IPR001806">
    <property type="entry name" value="Small_GTPase"/>
</dbReference>
<dbReference type="NCBIfam" id="TIGR00231">
    <property type="entry name" value="small_GTP"/>
    <property type="match status" value="1"/>
</dbReference>
<dbReference type="PANTHER" id="PTHR47978">
    <property type="match status" value="1"/>
</dbReference>
<dbReference type="Pfam" id="PF00071">
    <property type="entry name" value="Ras"/>
    <property type="match status" value="1"/>
</dbReference>
<dbReference type="PRINTS" id="PR00449">
    <property type="entry name" value="RASTRNSFRMNG"/>
</dbReference>
<dbReference type="SMART" id="SM00177">
    <property type="entry name" value="ARF"/>
    <property type="match status" value="1"/>
</dbReference>
<dbReference type="SMART" id="SM00175">
    <property type="entry name" value="RAB"/>
    <property type="match status" value="1"/>
</dbReference>
<dbReference type="SMART" id="SM00176">
    <property type="entry name" value="RAN"/>
    <property type="match status" value="1"/>
</dbReference>
<dbReference type="SMART" id="SM00173">
    <property type="entry name" value="RAS"/>
    <property type="match status" value="1"/>
</dbReference>
<dbReference type="SMART" id="SM00174">
    <property type="entry name" value="RHO"/>
    <property type="match status" value="1"/>
</dbReference>
<dbReference type="SUPFAM" id="SSF52540">
    <property type="entry name" value="P-loop containing nucleoside triphosphate hydrolases"/>
    <property type="match status" value="1"/>
</dbReference>
<dbReference type="PROSITE" id="PS51419">
    <property type="entry name" value="RAB"/>
    <property type="match status" value="1"/>
</dbReference>
<gene>
    <name type="ordered locus">MIMI_R214</name>
</gene>
<comment type="function">
    <text>May be involved in protein transport.</text>
</comment>
<comment type="subcellular location">
    <subcellularLocation>
        <location evidence="3">Host cell membrane</location>
        <topology evidence="3">Lipid-anchor</topology>
        <orientation evidence="3">Cytoplasmic side</orientation>
    </subcellularLocation>
</comment>
<comment type="similarity">
    <text evidence="3">Belongs to the small GTPase superfamily. Rab family.</text>
</comment>
<protein>
    <recommendedName>
        <fullName>Probable Rab-related GTPase</fullName>
    </recommendedName>
</protein>
<name>RABL_MIMIV</name>
<organism>
    <name type="scientific">Acanthamoeba polyphaga mimivirus</name>
    <name type="common">APMV</name>
    <dbReference type="NCBI Taxonomy" id="212035"/>
    <lineage>
        <taxon>Viruses</taxon>
        <taxon>Varidnaviria</taxon>
        <taxon>Bamfordvirae</taxon>
        <taxon>Nucleocytoviricota</taxon>
        <taxon>Megaviricetes</taxon>
        <taxon>Imitervirales</taxon>
        <taxon>Mimiviridae</taxon>
        <taxon>Megamimivirinae</taxon>
        <taxon>Mimivirus</taxon>
        <taxon>Mimivirus bradfordmassiliense</taxon>
    </lineage>
</organism>
<reference key="1">
    <citation type="journal article" date="2004" name="Science">
        <title>The 1.2-megabase genome sequence of Mimivirus.</title>
        <authorList>
            <person name="Raoult D."/>
            <person name="Audic S."/>
            <person name="Robert C."/>
            <person name="Abergel C."/>
            <person name="Renesto P."/>
            <person name="Ogata H."/>
            <person name="La Scola B."/>
            <person name="Susan M."/>
            <person name="Claverie J.-M."/>
        </authorList>
    </citation>
    <scope>NUCLEOTIDE SEQUENCE [LARGE SCALE GENOMIC DNA]</scope>
    <source>
        <strain>Rowbotham-Bradford</strain>
    </source>
</reference>
<proteinExistence type="evidence at protein level"/>
<sequence>MNSYIKEKMENNGYKIILIGSSGVGKSSIVHQFLFNRKISNVSPTIGAAFASKQVIAKNGKTLKLNIWDTAGQERFRSITKMYYTNSLGCLVVFDVTDRESFDDVYYWINDLRINCHTTYYILVVANKIDIDKNNWRVSENEIKKFCRDNDCDYVFASSFESDTVNNLFGKMIDKMSEIKINPDSRRNDIIYLSDKSSGIDDFIDKISQNCCYIS</sequence>
<evidence type="ECO:0000250" key="1"/>
<evidence type="ECO:0000255" key="2"/>
<evidence type="ECO:0000305" key="3"/>
<evidence type="ECO:0007829" key="4">
    <source>
        <dbReference type="PDB" id="5XC5"/>
    </source>
</evidence>
<keyword id="KW-0002">3D-structure</keyword>
<keyword id="KW-0342">GTP-binding</keyword>
<keyword id="KW-1032">Host cell membrane</keyword>
<keyword id="KW-1043">Host membrane</keyword>
<keyword id="KW-0449">Lipoprotein</keyword>
<keyword id="KW-0472">Membrane</keyword>
<keyword id="KW-0488">Methylation</keyword>
<keyword id="KW-0547">Nucleotide-binding</keyword>
<keyword id="KW-0636">Prenylation</keyword>
<keyword id="KW-0653">Protein transport</keyword>
<keyword id="KW-1185">Reference proteome</keyword>
<keyword id="KW-0813">Transport</keyword>
<organismHost>
    <name type="scientific">Acanthamoeba polyphaga</name>
    <name type="common">Amoeba</name>
    <dbReference type="NCBI Taxonomy" id="5757"/>
</organismHost>